<name>GPR85_HUMAN</name>
<dbReference type="EMBL" id="AF250237">
    <property type="protein sequence ID" value="AAF79956.1"/>
    <property type="molecule type" value="mRNA"/>
</dbReference>
<dbReference type="EMBL" id="AB040800">
    <property type="protein sequence ID" value="BAA96646.1"/>
    <property type="molecule type" value="mRNA"/>
</dbReference>
<dbReference type="EMBL" id="AB065688">
    <property type="protein sequence ID" value="BAC05911.1"/>
    <property type="molecule type" value="Genomic_DNA"/>
</dbReference>
<dbReference type="EMBL" id="AL161959">
    <property type="protein sequence ID" value="CAB82307.1"/>
    <property type="molecule type" value="mRNA"/>
</dbReference>
<dbReference type="EMBL" id="AC073346">
    <property type="protein sequence ID" value="AAQ93365.1"/>
    <property type="molecule type" value="Genomic_DNA"/>
</dbReference>
<dbReference type="CCDS" id="CCDS5758.1"/>
<dbReference type="PIR" id="T47131">
    <property type="entry name" value="T47131"/>
</dbReference>
<dbReference type="RefSeq" id="NP_001139737.1">
    <property type="nucleotide sequence ID" value="NM_001146265.2"/>
</dbReference>
<dbReference type="RefSeq" id="NP_001139738.1">
    <property type="nucleotide sequence ID" value="NM_001146266.2"/>
</dbReference>
<dbReference type="RefSeq" id="NP_001139739.1">
    <property type="nucleotide sequence ID" value="NM_001146267.2"/>
</dbReference>
<dbReference type="RefSeq" id="NP_061843.3">
    <property type="nucleotide sequence ID" value="NM_018970.6"/>
</dbReference>
<dbReference type="RefSeq" id="XP_005250508.1">
    <property type="nucleotide sequence ID" value="XM_005250451.3"/>
</dbReference>
<dbReference type="RefSeq" id="XP_016867841.1">
    <property type="nucleotide sequence ID" value="XM_017012352.3"/>
</dbReference>
<dbReference type="RefSeq" id="XP_054214440.1">
    <property type="nucleotide sequence ID" value="XM_054358465.1"/>
</dbReference>
<dbReference type="RefSeq" id="XP_054214441.1">
    <property type="nucleotide sequence ID" value="XM_054358466.1"/>
</dbReference>
<dbReference type="SMR" id="P60893"/>
<dbReference type="BioGRID" id="119932">
    <property type="interactions" value="11"/>
</dbReference>
<dbReference type="FunCoup" id="P60893">
    <property type="interactions" value="1333"/>
</dbReference>
<dbReference type="IntAct" id="P60893">
    <property type="interactions" value="1"/>
</dbReference>
<dbReference type="STRING" id="9606.ENSP00000297146"/>
<dbReference type="ChEMBL" id="CHEMBL4523868"/>
<dbReference type="GlyCosmos" id="P60893">
    <property type="glycosylation" value="3 sites, No reported glycans"/>
</dbReference>
<dbReference type="GlyGen" id="P60893">
    <property type="glycosylation" value="4 sites"/>
</dbReference>
<dbReference type="iPTMnet" id="P60893"/>
<dbReference type="PhosphoSitePlus" id="P60893"/>
<dbReference type="BioMuta" id="GPR85"/>
<dbReference type="DMDM" id="46397442"/>
<dbReference type="MassIVE" id="P60893"/>
<dbReference type="PaxDb" id="9606-ENSP00000297146"/>
<dbReference type="PeptideAtlas" id="P60893"/>
<dbReference type="ProteomicsDB" id="57234"/>
<dbReference type="Antibodypedia" id="17381">
    <property type="antibodies" value="164 antibodies from 26 providers"/>
</dbReference>
<dbReference type="DNASU" id="54329"/>
<dbReference type="Ensembl" id="ENST00000297146.7">
    <property type="protein sequence ID" value="ENSP00000297146.2"/>
    <property type="gene ID" value="ENSG00000164604.14"/>
</dbReference>
<dbReference type="Ensembl" id="ENST00000424100.2">
    <property type="protein sequence ID" value="ENSP00000396763.1"/>
    <property type="gene ID" value="ENSG00000164604.14"/>
</dbReference>
<dbReference type="Ensembl" id="ENST00000449591.2">
    <property type="protein sequence ID" value="ENSP00000401178.1"/>
    <property type="gene ID" value="ENSG00000164604.14"/>
</dbReference>
<dbReference type="Ensembl" id="ENST00000610164.1">
    <property type="protein sequence ID" value="ENSP00000476863.1"/>
    <property type="gene ID" value="ENSG00000164604.14"/>
</dbReference>
<dbReference type="GeneID" id="54329"/>
<dbReference type="KEGG" id="hsa:54329"/>
<dbReference type="MANE-Select" id="ENST00000424100.2">
    <property type="protein sequence ID" value="ENSP00000396763.1"/>
    <property type="RefSeq nucleotide sequence ID" value="NM_001146267.2"/>
    <property type="RefSeq protein sequence ID" value="NP_001139739.1"/>
</dbReference>
<dbReference type="UCSC" id="uc003vgp.2">
    <property type="organism name" value="human"/>
</dbReference>
<dbReference type="AGR" id="HGNC:4536"/>
<dbReference type="CTD" id="54329"/>
<dbReference type="DisGeNET" id="54329"/>
<dbReference type="GeneCards" id="GPR85"/>
<dbReference type="HGNC" id="HGNC:4536">
    <property type="gene designation" value="GPR85"/>
</dbReference>
<dbReference type="HPA" id="ENSG00000164604">
    <property type="expression patterns" value="Group enriched (brain, retina, skeletal muscle)"/>
</dbReference>
<dbReference type="MalaCards" id="GPR85"/>
<dbReference type="MIM" id="605188">
    <property type="type" value="gene"/>
</dbReference>
<dbReference type="neXtProt" id="NX_P60893"/>
<dbReference type="OpenTargets" id="ENSG00000164604"/>
<dbReference type="PharmGKB" id="PA28929"/>
<dbReference type="VEuPathDB" id="HostDB:ENSG00000164604"/>
<dbReference type="eggNOG" id="KOG3656">
    <property type="taxonomic scope" value="Eukaryota"/>
</dbReference>
<dbReference type="GeneTree" id="ENSGT00890000139436"/>
<dbReference type="HOGENOM" id="CLU_055518_0_0_1"/>
<dbReference type="InParanoid" id="P60893"/>
<dbReference type="OMA" id="WCPYLVA"/>
<dbReference type="OrthoDB" id="6129346at2759"/>
<dbReference type="PAN-GO" id="P60893">
    <property type="GO annotations" value="2 GO annotations based on evolutionary models"/>
</dbReference>
<dbReference type="PhylomeDB" id="P60893"/>
<dbReference type="TreeFam" id="TF331163"/>
<dbReference type="PathwayCommons" id="P60893"/>
<dbReference type="SignaLink" id="P60893"/>
<dbReference type="BioGRID-ORCS" id="54329">
    <property type="hits" value="14 hits in 1149 CRISPR screens"/>
</dbReference>
<dbReference type="GenomeRNAi" id="54329"/>
<dbReference type="Pharos" id="P60893">
    <property type="development level" value="Tbio"/>
</dbReference>
<dbReference type="PRO" id="PR:P60893"/>
<dbReference type="Proteomes" id="UP000005640">
    <property type="component" value="Chromosome 7"/>
</dbReference>
<dbReference type="RNAct" id="P60893">
    <property type="molecule type" value="protein"/>
</dbReference>
<dbReference type="Bgee" id="ENSG00000164604">
    <property type="expression patterns" value="Expressed in cortical plate and 128 other cell types or tissues"/>
</dbReference>
<dbReference type="ExpressionAtlas" id="P60893">
    <property type="expression patterns" value="baseline and differential"/>
</dbReference>
<dbReference type="GO" id="GO:0005783">
    <property type="term" value="C:endoplasmic reticulum"/>
    <property type="evidence" value="ECO:0000314"/>
    <property type="project" value="UniProtKB"/>
</dbReference>
<dbReference type="GO" id="GO:0005886">
    <property type="term" value="C:plasma membrane"/>
    <property type="evidence" value="ECO:0000314"/>
    <property type="project" value="LIFEdb"/>
</dbReference>
<dbReference type="GO" id="GO:0004930">
    <property type="term" value="F:G protein-coupled receptor activity"/>
    <property type="evidence" value="ECO:0000318"/>
    <property type="project" value="GO_Central"/>
</dbReference>
<dbReference type="GO" id="GO:0007165">
    <property type="term" value="P:signal transduction"/>
    <property type="evidence" value="ECO:0000304"/>
    <property type="project" value="UniProtKB"/>
</dbReference>
<dbReference type="CDD" id="cd15218">
    <property type="entry name" value="7tmA_SREB2_GPR85"/>
    <property type="match status" value="1"/>
</dbReference>
<dbReference type="FunFam" id="1.20.1070.10:FF:000074">
    <property type="entry name" value="probable G-protein coupled receptor 173"/>
    <property type="match status" value="1"/>
</dbReference>
<dbReference type="Gene3D" id="1.20.1070.10">
    <property type="entry name" value="Rhodopsin 7-helix transmembrane proteins"/>
    <property type="match status" value="1"/>
</dbReference>
<dbReference type="InterPro" id="IPR051509">
    <property type="entry name" value="GPCR_Orphan/Phoenixin"/>
</dbReference>
<dbReference type="InterPro" id="IPR000276">
    <property type="entry name" value="GPCR_Rhodpsn"/>
</dbReference>
<dbReference type="InterPro" id="IPR017452">
    <property type="entry name" value="GPCR_Rhodpsn_7TM"/>
</dbReference>
<dbReference type="PANTHER" id="PTHR19268">
    <property type="entry name" value="G PROTEIN-COUPLED RECEPTOR"/>
    <property type="match status" value="1"/>
</dbReference>
<dbReference type="PANTHER" id="PTHR19268:SF7">
    <property type="entry name" value="G-PROTEIN COUPLED RECEPTOR 85-RELATED"/>
    <property type="match status" value="1"/>
</dbReference>
<dbReference type="Pfam" id="PF00001">
    <property type="entry name" value="7tm_1"/>
    <property type="match status" value="1"/>
</dbReference>
<dbReference type="PRINTS" id="PR00237">
    <property type="entry name" value="GPCRRHODOPSN"/>
</dbReference>
<dbReference type="SUPFAM" id="SSF81321">
    <property type="entry name" value="Family A G protein-coupled receptor-like"/>
    <property type="match status" value="1"/>
</dbReference>
<dbReference type="PROSITE" id="PS50262">
    <property type="entry name" value="G_PROTEIN_RECEP_F1_2"/>
    <property type="match status" value="1"/>
</dbReference>
<reference key="1">
    <citation type="journal article" date="2000" name="Biochim. Biophys. Acta">
        <title>The brain-specific G-protein coupled receptor GPR85 with identical protein sequence in man and mouse maps to human chromosome 7q31.</title>
        <authorList>
            <person name="Hellebrand S."/>
            <person name="Schaller H.C."/>
            <person name="Wittenberger T."/>
        </authorList>
    </citation>
    <scope>NUCLEOTIDE SEQUENCE [MRNA]</scope>
    <scope>TISSUE SPECIFICITY</scope>
    <source>
        <tissue>Brain</tissue>
    </source>
</reference>
<reference key="2">
    <citation type="journal article" date="2000" name="Biochem. Biophys. Res. Commun.">
        <title>An evolutionarily conserved G-protein coupled receptor family, SREB, expressed in the central nervous system.</title>
        <authorList>
            <person name="Matsumoto M."/>
            <person name="Saito T."/>
            <person name="Takasaki J."/>
            <person name="Kamohara M."/>
            <person name="Sugimoto T."/>
            <person name="Kobayashi M."/>
            <person name="Tadokoro M."/>
            <person name="Matsumoto S."/>
            <person name="Ohishi T."/>
            <person name="Furuichi K."/>
        </authorList>
    </citation>
    <scope>NUCLEOTIDE SEQUENCE [MRNA]</scope>
    <scope>TISSUE SPECIFICITY</scope>
    <source>
        <tissue>Brain</tissue>
    </source>
</reference>
<reference key="3">
    <citation type="submission" date="2001-07" db="EMBL/GenBank/DDBJ databases">
        <title>Genome-wide discovery and analysis of human seven transmembrane helix receptor genes.</title>
        <authorList>
            <person name="Suwa M."/>
            <person name="Sato T."/>
            <person name="Okouchi I."/>
            <person name="Arita M."/>
            <person name="Futami K."/>
            <person name="Matsumoto S."/>
            <person name="Tsutsumi S."/>
            <person name="Aburatani H."/>
            <person name="Asai K."/>
            <person name="Akiyama Y."/>
        </authorList>
    </citation>
    <scope>NUCLEOTIDE SEQUENCE [GENOMIC DNA]</scope>
</reference>
<reference key="4">
    <citation type="journal article" date="2007" name="BMC Genomics">
        <title>The full-ORF clone resource of the German cDNA consortium.</title>
        <authorList>
            <person name="Bechtel S."/>
            <person name="Rosenfelder H."/>
            <person name="Duda A."/>
            <person name="Schmidt C.P."/>
            <person name="Ernst U."/>
            <person name="Wellenreuther R."/>
            <person name="Mehrle A."/>
            <person name="Schuster C."/>
            <person name="Bahr A."/>
            <person name="Bloecker H."/>
            <person name="Heubner D."/>
            <person name="Hoerlein A."/>
            <person name="Michel G."/>
            <person name="Wedler H."/>
            <person name="Koehrer K."/>
            <person name="Ottenwaelder B."/>
            <person name="Poustka A."/>
            <person name="Wiemann S."/>
            <person name="Schupp I."/>
        </authorList>
    </citation>
    <scope>NUCLEOTIDE SEQUENCE [LARGE SCALE MRNA]</scope>
    <source>
        <tissue>Amygdala</tissue>
    </source>
</reference>
<reference key="5">
    <citation type="journal article" date="2003" name="Nature">
        <title>The DNA sequence of human chromosome 7.</title>
        <authorList>
            <person name="Hillier L.W."/>
            <person name="Fulton R.S."/>
            <person name="Fulton L.A."/>
            <person name="Graves T.A."/>
            <person name="Pepin K.H."/>
            <person name="Wagner-McPherson C."/>
            <person name="Layman D."/>
            <person name="Maas J."/>
            <person name="Jaeger S."/>
            <person name="Walker R."/>
            <person name="Wylie K."/>
            <person name="Sekhon M."/>
            <person name="Becker M.C."/>
            <person name="O'Laughlin M.D."/>
            <person name="Schaller M.E."/>
            <person name="Fewell G.A."/>
            <person name="Delehaunty K.D."/>
            <person name="Miner T.L."/>
            <person name="Nash W.E."/>
            <person name="Cordes M."/>
            <person name="Du H."/>
            <person name="Sun H."/>
            <person name="Edwards J."/>
            <person name="Bradshaw-Cordum H."/>
            <person name="Ali J."/>
            <person name="Andrews S."/>
            <person name="Isak A."/>
            <person name="Vanbrunt A."/>
            <person name="Nguyen C."/>
            <person name="Du F."/>
            <person name="Lamar B."/>
            <person name="Courtney L."/>
            <person name="Kalicki J."/>
            <person name="Ozersky P."/>
            <person name="Bielicki L."/>
            <person name="Scott K."/>
            <person name="Holmes A."/>
            <person name="Harkins R."/>
            <person name="Harris A."/>
            <person name="Strong C.M."/>
            <person name="Hou S."/>
            <person name="Tomlinson C."/>
            <person name="Dauphin-Kohlberg S."/>
            <person name="Kozlowicz-Reilly A."/>
            <person name="Leonard S."/>
            <person name="Rohlfing T."/>
            <person name="Rock S.M."/>
            <person name="Tin-Wollam A.-M."/>
            <person name="Abbott A."/>
            <person name="Minx P."/>
            <person name="Maupin R."/>
            <person name="Strowmatt C."/>
            <person name="Latreille P."/>
            <person name="Miller N."/>
            <person name="Johnson D."/>
            <person name="Murray J."/>
            <person name="Woessner J.P."/>
            <person name="Wendl M.C."/>
            <person name="Yang S.-P."/>
            <person name="Schultz B.R."/>
            <person name="Wallis J.W."/>
            <person name="Spieth J."/>
            <person name="Bieri T.A."/>
            <person name="Nelson J.O."/>
            <person name="Berkowicz N."/>
            <person name="Wohldmann P.E."/>
            <person name="Cook L.L."/>
            <person name="Hickenbotham M.T."/>
            <person name="Eldred J."/>
            <person name="Williams D."/>
            <person name="Bedell J.A."/>
            <person name="Mardis E.R."/>
            <person name="Clifton S.W."/>
            <person name="Chissoe S.L."/>
            <person name="Marra M.A."/>
            <person name="Raymond C."/>
            <person name="Haugen E."/>
            <person name="Gillett W."/>
            <person name="Zhou Y."/>
            <person name="James R."/>
            <person name="Phelps K."/>
            <person name="Iadanoto S."/>
            <person name="Bubb K."/>
            <person name="Simms E."/>
            <person name="Levy R."/>
            <person name="Clendenning J."/>
            <person name="Kaul R."/>
            <person name="Kent W.J."/>
            <person name="Furey T.S."/>
            <person name="Baertsch R.A."/>
            <person name="Brent M.R."/>
            <person name="Keibler E."/>
            <person name="Flicek P."/>
            <person name="Bork P."/>
            <person name="Suyama M."/>
            <person name="Bailey J.A."/>
            <person name="Portnoy M.E."/>
            <person name="Torrents D."/>
            <person name="Chinwalla A.T."/>
            <person name="Gish W.R."/>
            <person name="Eddy S.R."/>
            <person name="McPherson J.D."/>
            <person name="Olson M.V."/>
            <person name="Eichler E.E."/>
            <person name="Green E.D."/>
            <person name="Waterston R.H."/>
            <person name="Wilson R.K."/>
        </authorList>
    </citation>
    <scope>NUCLEOTIDE SEQUENCE [LARGE SCALE GENOMIC DNA]</scope>
</reference>
<reference key="6">
    <citation type="journal article" date="2015" name="Mol. Autism">
        <title>The association of GPR85 with PSD-95-neuroligin complex and autism spectrum disorder: a molecular analysis.</title>
        <authorList>
            <person name="Fujita-Jimbo E."/>
            <person name="Tanabe Y."/>
            <person name="Yu Z."/>
            <person name="Kojima K."/>
            <person name="Mori M."/>
            <person name="Li H."/>
            <person name="Iwamoto S."/>
            <person name="Yamagata T."/>
            <person name="Momoi M.Y."/>
            <person name="Momoi T."/>
        </authorList>
    </citation>
    <scope>VARIANTS THR-152 AND LEU-221</scope>
    <scope>CHARACTERIZATION OF VARIANTS THR-152 AND LEU-221</scope>
    <scope>SUBCELLULAR LOCATION</scope>
    <scope>INTERACTION WITH DLG4 AND DLG3</scope>
</reference>
<accession>P60893</accession>
<accession>Q9JHI6</accession>
<accession>Q9NPD1</accession>
<proteinExistence type="evidence at protein level"/>
<keyword id="KW-1003">Cell membrane</keyword>
<keyword id="KW-1015">Disulfide bond</keyword>
<keyword id="KW-0256">Endoplasmic reticulum</keyword>
<keyword id="KW-0297">G-protein coupled receptor</keyword>
<keyword id="KW-0325">Glycoprotein</keyword>
<keyword id="KW-0472">Membrane</keyword>
<keyword id="KW-0675">Receptor</keyword>
<keyword id="KW-1185">Reference proteome</keyword>
<keyword id="KW-0807">Transducer</keyword>
<keyword id="KW-0812">Transmembrane</keyword>
<keyword id="KW-1133">Transmembrane helix</keyword>
<organism>
    <name type="scientific">Homo sapiens</name>
    <name type="common">Human</name>
    <dbReference type="NCBI Taxonomy" id="9606"/>
    <lineage>
        <taxon>Eukaryota</taxon>
        <taxon>Metazoa</taxon>
        <taxon>Chordata</taxon>
        <taxon>Craniata</taxon>
        <taxon>Vertebrata</taxon>
        <taxon>Euteleostomi</taxon>
        <taxon>Mammalia</taxon>
        <taxon>Eutheria</taxon>
        <taxon>Euarchontoglires</taxon>
        <taxon>Primates</taxon>
        <taxon>Haplorrhini</taxon>
        <taxon>Catarrhini</taxon>
        <taxon>Hominidae</taxon>
        <taxon>Homo</taxon>
    </lineage>
</organism>
<comment type="function">
    <text>Orphan receptor.</text>
</comment>
<comment type="subunit">
    <text evidence="6">Interacts with DLG4 and DLG3.</text>
</comment>
<comment type="subcellular location">
    <subcellularLocation>
        <location evidence="1">Cell membrane</location>
        <topology evidence="1">Multi-pass membrane protein</topology>
    </subcellularLocation>
    <subcellularLocation>
        <location evidence="6">Endoplasmic reticulum</location>
    </subcellularLocation>
</comment>
<comment type="tissue specificity">
    <text evidence="4 5">Highly expressed in brain and testis. Lower levels in small intestine, placenta and spleen. In brain regions, detected in all regions tested, but somewhat lower levels in the corpus callosum, medulla and spinal cord.</text>
</comment>
<comment type="similarity">
    <text evidence="3">Belongs to the G-protein coupled receptor 1 family.</text>
</comment>
<sequence length="370" mass="41995">MANYSHAADNILQNLSPLTAFLKLTSLGFIIGVSVVGNLLISILLVKDKTLHRAPYYFLLDLCCSDILRSAICFPFVFNSVKNGSTWTYGTLTCKVIAFLGVLSCFHTAFMLFCISVTRYLAIAHHRFYTKRLTFWTCLAVICMVWTLSVAMAFPPVLDVGTYSFIREEDQCTFQHRSFRANDSLGFMLLLALILLATQLVYLKLIFFVHDRRKMKPVQFVAAVSQNWTFHGPGASGQAAANWLAGFGRGPTPPTLLGIRQNANTTGRRRLLVLDEFKMEKRISRMFYIMTFLFLTLWGPYLVACYWRVFARGPVVPGGFLTAAVWMSFAQAGINPFVCIFSNRELRRCFSTTLLYCRKSRLPREPYCVI</sequence>
<gene>
    <name type="primary">GPR85</name>
    <name type="synonym">SREB2</name>
</gene>
<protein>
    <recommendedName>
        <fullName>Probable G-protein coupled receptor 85</fullName>
    </recommendedName>
    <alternativeName>
        <fullName>Super conserved receptor expressed in brain 2</fullName>
    </alternativeName>
</protein>
<evidence type="ECO:0000250" key="1"/>
<evidence type="ECO:0000255" key="2"/>
<evidence type="ECO:0000255" key="3">
    <source>
        <dbReference type="PROSITE-ProRule" id="PRU00521"/>
    </source>
</evidence>
<evidence type="ECO:0000269" key="4">
    <source>
    </source>
</evidence>
<evidence type="ECO:0000269" key="5">
    <source>
    </source>
</evidence>
<evidence type="ECO:0000269" key="6">
    <source>
    </source>
</evidence>
<feature type="chain" id="PRO_0000069591" description="Probable G-protein coupled receptor 85">
    <location>
        <begin position="1"/>
        <end position="370"/>
    </location>
</feature>
<feature type="topological domain" description="Extracellular" evidence="2">
    <location>
        <begin position="1"/>
        <end position="25"/>
    </location>
</feature>
<feature type="transmembrane region" description="Helical; Name=1" evidence="2">
    <location>
        <begin position="26"/>
        <end position="46"/>
    </location>
</feature>
<feature type="topological domain" description="Cytoplasmic" evidence="2">
    <location>
        <begin position="47"/>
        <end position="57"/>
    </location>
</feature>
<feature type="transmembrane region" description="Helical; Name=2" evidence="2">
    <location>
        <begin position="58"/>
        <end position="78"/>
    </location>
</feature>
<feature type="topological domain" description="Extracellular" evidence="2">
    <location>
        <begin position="79"/>
        <end position="96"/>
    </location>
</feature>
<feature type="transmembrane region" description="Helical; Name=3" evidence="2">
    <location>
        <begin position="97"/>
        <end position="117"/>
    </location>
</feature>
<feature type="topological domain" description="Cytoplasmic" evidence="2">
    <location>
        <begin position="118"/>
        <end position="137"/>
    </location>
</feature>
<feature type="transmembrane region" description="Helical; Name=4" evidence="2">
    <location>
        <begin position="138"/>
        <end position="158"/>
    </location>
</feature>
<feature type="topological domain" description="Extracellular" evidence="2">
    <location>
        <begin position="159"/>
        <end position="188"/>
    </location>
</feature>
<feature type="transmembrane region" description="Helical; Name=5" evidence="2">
    <location>
        <begin position="189"/>
        <end position="209"/>
    </location>
</feature>
<feature type="topological domain" description="Cytoplasmic" evidence="2">
    <location>
        <begin position="210"/>
        <end position="286"/>
    </location>
</feature>
<feature type="transmembrane region" description="Helical; Name=6" evidence="2">
    <location>
        <begin position="287"/>
        <end position="307"/>
    </location>
</feature>
<feature type="topological domain" description="Extracellular" evidence="2">
    <location>
        <begin position="308"/>
        <end position="313"/>
    </location>
</feature>
<feature type="transmembrane region" description="Helical; Name=7" evidence="2">
    <location>
        <begin position="314"/>
        <end position="334"/>
    </location>
</feature>
<feature type="topological domain" description="Cytoplasmic" evidence="2">
    <location>
        <begin position="335"/>
        <end position="370"/>
    </location>
</feature>
<feature type="glycosylation site" description="N-linked (GlcNAc...) asparagine" evidence="2">
    <location>
        <position position="3"/>
    </location>
</feature>
<feature type="glycosylation site" description="N-linked (GlcNAc...) asparagine" evidence="2">
    <location>
        <position position="83"/>
    </location>
</feature>
<feature type="glycosylation site" description="N-linked (GlcNAc...) asparagine" evidence="2">
    <location>
        <position position="182"/>
    </location>
</feature>
<feature type="disulfide bond" evidence="3">
    <location>
        <begin position="94"/>
        <end position="172"/>
    </location>
</feature>
<feature type="sequence variant" id="VAR_074204" description="Found in a patient with autism spectrum disorder; uncertain significance; induces response to endoplasmic reticulum stress; negative regulation of dendrite morphogenesis." evidence="6">
    <original>M</original>
    <variation>T</variation>
    <location>
        <position position="152"/>
    </location>
</feature>
<feature type="sequence variant" id="VAR_074205" description="Found in a patient with autism spectrum disorder; uncertain significance; induces response to endoplasmic reticulum stress; negative regulation of dendrite morphogenesis." evidence="6">
    <original>V</original>
    <variation>L</variation>
    <location>
        <position position="221"/>
    </location>
</feature>